<gene>
    <name evidence="1" type="primary">ndhB1</name>
</gene>
<feature type="chain" id="PRO_0000344269" description="NAD(P)H-quinone oxidoreductase subunit 2 A, chloroplastic">
    <location>
        <begin position="1"/>
        <end position="508"/>
    </location>
</feature>
<feature type="transmembrane region" description="Helical" evidence="1">
    <location>
        <begin position="24"/>
        <end position="44"/>
    </location>
</feature>
<feature type="transmembrane region" description="Helical" evidence="1">
    <location>
        <begin position="59"/>
        <end position="79"/>
    </location>
</feature>
<feature type="transmembrane region" description="Helical" evidence="1">
    <location>
        <begin position="99"/>
        <end position="119"/>
    </location>
</feature>
<feature type="transmembrane region" description="Helical" evidence="1">
    <location>
        <begin position="124"/>
        <end position="144"/>
    </location>
</feature>
<feature type="transmembrane region" description="Helical" evidence="1">
    <location>
        <begin position="149"/>
        <end position="169"/>
    </location>
</feature>
<feature type="transmembrane region" description="Helical" evidence="1">
    <location>
        <begin position="184"/>
        <end position="204"/>
    </location>
</feature>
<feature type="transmembrane region" description="Helical" evidence="1">
    <location>
        <begin position="227"/>
        <end position="247"/>
    </location>
</feature>
<feature type="transmembrane region" description="Helical" evidence="1">
    <location>
        <begin position="295"/>
        <end position="315"/>
    </location>
</feature>
<feature type="transmembrane region" description="Helical" evidence="1">
    <location>
        <begin position="323"/>
        <end position="343"/>
    </location>
</feature>
<feature type="transmembrane region" description="Helical" evidence="1">
    <location>
        <begin position="354"/>
        <end position="374"/>
    </location>
</feature>
<feature type="transmembrane region" description="Helical" evidence="1">
    <location>
        <begin position="395"/>
        <end position="415"/>
    </location>
</feature>
<feature type="transmembrane region" description="Helical" evidence="1">
    <location>
        <begin position="418"/>
        <end position="438"/>
    </location>
</feature>
<feature type="transmembrane region" description="Helical" evidence="1">
    <location>
        <begin position="482"/>
        <end position="502"/>
    </location>
</feature>
<protein>
    <recommendedName>
        <fullName evidence="1">NAD(P)H-quinone oxidoreductase subunit 2 A, chloroplastic</fullName>
        <ecNumber evidence="1">7.1.1.-</ecNumber>
    </recommendedName>
    <alternativeName>
        <fullName evidence="1">NAD(P)H dehydrogenase, subunit 2 A</fullName>
    </alternativeName>
    <alternativeName>
        <fullName evidence="1">NADH-plastoquinone oxidoreductase subunit 2 A</fullName>
    </alternativeName>
</protein>
<sequence>MSWHVQNENFILDSTRIFMKAFHLLLFDGSLIFPECILIFGLILLLMIDSTSDQKERPWLYFISSTSLVMSITALLFRWREEPMISFSGNFQTNNFNEIFQFLILLCSTLCIPLSVEYIECTEMAITEFLLFVLTATLGGMFLCGANDFITIFVAPECFSLCSYLLSGYTKKDVRSNEATMKYLLMGGASSSILVHGFSWLYGLSGGEIELQEIVNGLINTQMYNSPGISIALIFITVGIGFKLSPAPSHQWTPDVYEGSPTPVVAFLSVTSKVAASASATRIFDIPFYFSSNEWHLLLEILAILSMILGNLIAITQTSMKRMLAYSSIGQIGYVIIGIIVGDSNDGYASMITYMLFYISMNLGAFACIVLFGLRTGTDNIRDYAGLYTKDPFLALSLALCLLSLGGLPPLAGFFGKLYLFWCGWQAGLYFLVFIGLLTSVVSIYYYLKIIKLLMTGRNQAITPHVRNYRRSPSNNSIELSMIVCVIASTIPGISMNPIIAIAQDTLF</sequence>
<comment type="function">
    <text evidence="1">NDH shuttles electrons from NAD(P)H:plastoquinone, via FMN and iron-sulfur (Fe-S) centers, to quinones in the photosynthetic chain and possibly in a chloroplast respiratory chain. The immediate electron acceptor for the enzyme in this species is believed to be plastoquinone. Couples the redox reaction to proton translocation, and thus conserves the redox energy in a proton gradient.</text>
</comment>
<comment type="catalytic activity">
    <reaction evidence="1">
        <text>a plastoquinone + NADH + (n+1) H(+)(in) = a plastoquinol + NAD(+) + n H(+)(out)</text>
        <dbReference type="Rhea" id="RHEA:42608"/>
        <dbReference type="Rhea" id="RHEA-COMP:9561"/>
        <dbReference type="Rhea" id="RHEA-COMP:9562"/>
        <dbReference type="ChEBI" id="CHEBI:15378"/>
        <dbReference type="ChEBI" id="CHEBI:17757"/>
        <dbReference type="ChEBI" id="CHEBI:57540"/>
        <dbReference type="ChEBI" id="CHEBI:57945"/>
        <dbReference type="ChEBI" id="CHEBI:62192"/>
    </reaction>
</comment>
<comment type="catalytic activity">
    <reaction evidence="1">
        <text>a plastoquinone + NADPH + (n+1) H(+)(in) = a plastoquinol + NADP(+) + n H(+)(out)</text>
        <dbReference type="Rhea" id="RHEA:42612"/>
        <dbReference type="Rhea" id="RHEA-COMP:9561"/>
        <dbReference type="Rhea" id="RHEA-COMP:9562"/>
        <dbReference type="ChEBI" id="CHEBI:15378"/>
        <dbReference type="ChEBI" id="CHEBI:17757"/>
        <dbReference type="ChEBI" id="CHEBI:57783"/>
        <dbReference type="ChEBI" id="CHEBI:58349"/>
        <dbReference type="ChEBI" id="CHEBI:62192"/>
    </reaction>
</comment>
<comment type="subunit">
    <text evidence="1">NDH is composed of at least 16 different subunits, 5 of which are encoded in the nucleus.</text>
</comment>
<comment type="subcellular location">
    <subcellularLocation>
        <location evidence="1">Plastid</location>
        <location evidence="1">Chloroplast thylakoid membrane</location>
        <topology evidence="1">Multi-pass membrane protein</topology>
    </subcellularLocation>
</comment>
<comment type="similarity">
    <text evidence="1">Belongs to the complex I subunit 2 family.</text>
</comment>
<geneLocation type="chloroplast"/>
<proteinExistence type="inferred from homology"/>
<dbReference type="EC" id="7.1.1.-" evidence="1"/>
<dbReference type="EMBL" id="EU118126">
    <property type="protein sequence ID" value="ABV02392.1"/>
    <property type="molecule type" value="Genomic_DNA"/>
</dbReference>
<dbReference type="SMR" id="P0CC76"/>
<dbReference type="GO" id="GO:0009535">
    <property type="term" value="C:chloroplast thylakoid membrane"/>
    <property type="evidence" value="ECO:0007669"/>
    <property type="project" value="UniProtKB-SubCell"/>
</dbReference>
<dbReference type="GO" id="GO:0008137">
    <property type="term" value="F:NADH dehydrogenase (ubiquinone) activity"/>
    <property type="evidence" value="ECO:0007669"/>
    <property type="project" value="InterPro"/>
</dbReference>
<dbReference type="GO" id="GO:0048038">
    <property type="term" value="F:quinone binding"/>
    <property type="evidence" value="ECO:0007669"/>
    <property type="project" value="UniProtKB-KW"/>
</dbReference>
<dbReference type="GO" id="GO:0042773">
    <property type="term" value="P:ATP synthesis coupled electron transport"/>
    <property type="evidence" value="ECO:0007669"/>
    <property type="project" value="InterPro"/>
</dbReference>
<dbReference type="GO" id="GO:0019684">
    <property type="term" value="P:photosynthesis, light reaction"/>
    <property type="evidence" value="ECO:0007669"/>
    <property type="project" value="UniProtKB-UniRule"/>
</dbReference>
<dbReference type="HAMAP" id="MF_00445">
    <property type="entry name" value="NDH1_NuoN_1"/>
    <property type="match status" value="1"/>
</dbReference>
<dbReference type="InterPro" id="IPR010096">
    <property type="entry name" value="NADH-Q_OxRdtase_suN/2"/>
</dbReference>
<dbReference type="InterPro" id="IPR001750">
    <property type="entry name" value="ND/Mrp_TM"/>
</dbReference>
<dbReference type="InterPro" id="IPR045693">
    <property type="entry name" value="Ndh2_N"/>
</dbReference>
<dbReference type="NCBIfam" id="TIGR01770">
    <property type="entry name" value="NDH_I_N"/>
    <property type="match status" value="1"/>
</dbReference>
<dbReference type="NCBIfam" id="NF002701">
    <property type="entry name" value="PRK02504.1"/>
    <property type="match status" value="1"/>
</dbReference>
<dbReference type="PANTHER" id="PTHR22773">
    <property type="entry name" value="NADH DEHYDROGENASE"/>
    <property type="match status" value="1"/>
</dbReference>
<dbReference type="Pfam" id="PF19530">
    <property type="entry name" value="Ndh2_N"/>
    <property type="match status" value="1"/>
</dbReference>
<dbReference type="Pfam" id="PF00361">
    <property type="entry name" value="Proton_antipo_M"/>
    <property type="match status" value="1"/>
</dbReference>
<dbReference type="PRINTS" id="PR01434">
    <property type="entry name" value="NADHDHGNASE5"/>
</dbReference>
<keyword id="KW-0150">Chloroplast</keyword>
<keyword id="KW-0472">Membrane</keyword>
<keyword id="KW-0520">NAD</keyword>
<keyword id="KW-0521">NADP</keyword>
<keyword id="KW-0934">Plastid</keyword>
<keyword id="KW-0618">Plastoquinone</keyword>
<keyword id="KW-0874">Quinone</keyword>
<keyword id="KW-0793">Thylakoid</keyword>
<keyword id="KW-1278">Translocase</keyword>
<keyword id="KW-0812">Transmembrane</keyword>
<keyword id="KW-1133">Transmembrane helix</keyword>
<keyword id="KW-0813">Transport</keyword>
<name>NU2C1_IPOPU</name>
<reference key="1">
    <citation type="journal article" date="2007" name="BMC Plant Biol.">
        <title>Complete plastid genome sequences suggest strong selection for retention of photosynthetic genes in the parasitic plant genus Cuscuta.</title>
        <authorList>
            <person name="McNeal J.R."/>
            <person name="Kuehl J.V."/>
            <person name="Boore J.L."/>
            <person name="dePamphilis C.W."/>
        </authorList>
    </citation>
    <scope>NUCLEOTIDE SEQUENCE [LARGE SCALE GENOMIC DNA]</scope>
</reference>
<organism>
    <name type="scientific">Ipomoea purpurea</name>
    <name type="common">Common morning glory</name>
    <name type="synonym">Pharbitis purpurea</name>
    <dbReference type="NCBI Taxonomy" id="4121"/>
    <lineage>
        <taxon>Eukaryota</taxon>
        <taxon>Viridiplantae</taxon>
        <taxon>Streptophyta</taxon>
        <taxon>Embryophyta</taxon>
        <taxon>Tracheophyta</taxon>
        <taxon>Spermatophyta</taxon>
        <taxon>Magnoliopsida</taxon>
        <taxon>eudicotyledons</taxon>
        <taxon>Gunneridae</taxon>
        <taxon>Pentapetalae</taxon>
        <taxon>asterids</taxon>
        <taxon>lamiids</taxon>
        <taxon>Solanales</taxon>
        <taxon>Convolvulaceae</taxon>
        <taxon>Ipomoeeae</taxon>
        <taxon>Ipomoea</taxon>
    </lineage>
</organism>
<evidence type="ECO:0000255" key="1">
    <source>
        <dbReference type="HAMAP-Rule" id="MF_00445"/>
    </source>
</evidence>
<accession>P0CC76</accession>
<accession>A7Y3J8</accession>